<proteinExistence type="inferred from homology"/>
<comment type="subcellular location">
    <subcellularLocation>
        <location evidence="3">Membrane</location>
        <topology evidence="3">Single-pass membrane protein</topology>
    </subcellularLocation>
</comment>
<comment type="similarity">
    <text evidence="3">Belongs to the SMCO4 family.</text>
</comment>
<evidence type="ECO:0000255" key="1"/>
<evidence type="ECO:0000256" key="2">
    <source>
        <dbReference type="SAM" id="MobiDB-lite"/>
    </source>
</evidence>
<evidence type="ECO:0000305" key="3"/>
<dbReference type="EMBL" id="AAAB01008888">
    <property type="protein sequence ID" value="EAA44637.3"/>
    <property type="molecule type" value="Genomic_DNA"/>
</dbReference>
<dbReference type="RefSeq" id="XP_313277.3">
    <property type="nucleotide sequence ID" value="XM_313277.4"/>
</dbReference>
<dbReference type="SMR" id="Q7PH91"/>
<dbReference type="FunCoup" id="Q7PH91">
    <property type="interactions" value="1"/>
</dbReference>
<dbReference type="PaxDb" id="7165-AGAP003534-PA"/>
<dbReference type="EnsemblMetazoa" id="AGAP003534-RA">
    <property type="protein sequence ID" value="AGAP003534-PA"/>
    <property type="gene ID" value="AGAP003534"/>
</dbReference>
<dbReference type="VEuPathDB" id="VectorBase:AGAMI1_000499"/>
<dbReference type="VEuPathDB" id="VectorBase:AGAP003534"/>
<dbReference type="eggNOG" id="ENOG502S7F4">
    <property type="taxonomic scope" value="Eukaryota"/>
</dbReference>
<dbReference type="HOGENOM" id="CLU_209950_1_0_1"/>
<dbReference type="InParanoid" id="Q7PH91"/>
<dbReference type="OMA" id="FFIYANT"/>
<dbReference type="PhylomeDB" id="Q7PH91"/>
<dbReference type="Proteomes" id="UP000007062">
    <property type="component" value="Chromosome 2R"/>
</dbReference>
<dbReference type="GO" id="GO:0016020">
    <property type="term" value="C:membrane"/>
    <property type="evidence" value="ECO:0007669"/>
    <property type="project" value="UniProtKB-SubCell"/>
</dbReference>
<dbReference type="InterPro" id="IPR027960">
    <property type="entry name" value="DUF4519"/>
</dbReference>
<dbReference type="PANTHER" id="PTHR34644">
    <property type="entry name" value="SINGLE-PASS MEMBRANE AND COILED-COIL DOMAIN-CONTAINING PROTEIN 4"/>
    <property type="match status" value="1"/>
</dbReference>
<dbReference type="PANTHER" id="PTHR34644:SF2">
    <property type="entry name" value="SINGLE-PASS MEMBRANE AND COILED-COIL DOMAIN-CONTAINING PROTEIN 4"/>
    <property type="match status" value="1"/>
</dbReference>
<dbReference type="Pfam" id="PF15012">
    <property type="entry name" value="DUF4519"/>
    <property type="match status" value="1"/>
</dbReference>
<protein>
    <recommendedName>
        <fullName>Single-pass membrane and coiled-coil domain-containing protein 4 homolog</fullName>
    </recommendedName>
</protein>
<gene>
    <name type="ORF">AGAP003534</name>
</gene>
<organism>
    <name type="scientific">Anopheles gambiae</name>
    <name type="common">African malaria mosquito</name>
    <dbReference type="NCBI Taxonomy" id="7165"/>
    <lineage>
        <taxon>Eukaryota</taxon>
        <taxon>Metazoa</taxon>
        <taxon>Ecdysozoa</taxon>
        <taxon>Arthropoda</taxon>
        <taxon>Hexapoda</taxon>
        <taxon>Insecta</taxon>
        <taxon>Pterygota</taxon>
        <taxon>Neoptera</taxon>
        <taxon>Endopterygota</taxon>
        <taxon>Diptera</taxon>
        <taxon>Nematocera</taxon>
        <taxon>Culicoidea</taxon>
        <taxon>Culicidae</taxon>
        <taxon>Anophelinae</taxon>
        <taxon>Anopheles</taxon>
    </lineage>
</organism>
<accession>Q7PH91</accession>
<reference key="1">
    <citation type="journal article" date="2002" name="Science">
        <title>The genome sequence of the malaria mosquito Anopheles gambiae.</title>
        <authorList>
            <person name="Holt R.A."/>
            <person name="Subramanian G.M."/>
            <person name="Halpern A."/>
            <person name="Sutton G.G."/>
            <person name="Charlab R."/>
            <person name="Nusskern D.R."/>
            <person name="Wincker P."/>
            <person name="Clark A.G."/>
            <person name="Ribeiro J.M.C."/>
            <person name="Wides R."/>
            <person name="Salzberg S.L."/>
            <person name="Loftus B.J."/>
            <person name="Yandell M.D."/>
            <person name="Majoros W.H."/>
            <person name="Rusch D.B."/>
            <person name="Lai Z."/>
            <person name="Kraft C.L."/>
            <person name="Abril J.F."/>
            <person name="Anthouard V."/>
            <person name="Arensburger P."/>
            <person name="Atkinson P.W."/>
            <person name="Baden H."/>
            <person name="de Berardinis V."/>
            <person name="Baldwin D."/>
            <person name="Benes V."/>
            <person name="Biedler J."/>
            <person name="Blass C."/>
            <person name="Bolanos R."/>
            <person name="Boscus D."/>
            <person name="Barnstead M."/>
            <person name="Cai S."/>
            <person name="Center A."/>
            <person name="Chaturverdi K."/>
            <person name="Christophides G.K."/>
            <person name="Chrystal M.A.M."/>
            <person name="Clamp M."/>
            <person name="Cravchik A."/>
            <person name="Curwen V."/>
            <person name="Dana A."/>
            <person name="Delcher A."/>
            <person name="Dew I."/>
            <person name="Evans C.A."/>
            <person name="Flanigan M."/>
            <person name="Grundschober-Freimoser A."/>
            <person name="Friedli L."/>
            <person name="Gu Z."/>
            <person name="Guan P."/>
            <person name="Guigo R."/>
            <person name="Hillenmeyer M.E."/>
            <person name="Hladun S.L."/>
            <person name="Hogan J.R."/>
            <person name="Hong Y.S."/>
            <person name="Hoover J."/>
            <person name="Jaillon O."/>
            <person name="Ke Z."/>
            <person name="Kodira C.D."/>
            <person name="Kokoza E."/>
            <person name="Koutsos A."/>
            <person name="Letunic I."/>
            <person name="Levitsky A.A."/>
            <person name="Liang Y."/>
            <person name="Lin J.-J."/>
            <person name="Lobo N.F."/>
            <person name="Lopez J.R."/>
            <person name="Malek J.A."/>
            <person name="McIntosh T.C."/>
            <person name="Meister S."/>
            <person name="Miller J.R."/>
            <person name="Mobarry C."/>
            <person name="Mongin E."/>
            <person name="Murphy S.D."/>
            <person name="O'Brochta D.A."/>
            <person name="Pfannkoch C."/>
            <person name="Qi R."/>
            <person name="Regier M.A."/>
            <person name="Remington K."/>
            <person name="Shao H."/>
            <person name="Sharakhova M.V."/>
            <person name="Sitter C.D."/>
            <person name="Shetty J."/>
            <person name="Smith T.J."/>
            <person name="Strong R."/>
            <person name="Sun J."/>
            <person name="Thomasova D."/>
            <person name="Ton L.Q."/>
            <person name="Topalis P."/>
            <person name="Tu Z.J."/>
            <person name="Unger M.F."/>
            <person name="Walenz B."/>
            <person name="Wang A.H."/>
            <person name="Wang J."/>
            <person name="Wang M."/>
            <person name="Wang X."/>
            <person name="Woodford K.J."/>
            <person name="Wortman J.R."/>
            <person name="Wu M."/>
            <person name="Yao A."/>
            <person name="Zdobnov E.M."/>
            <person name="Zhang H."/>
            <person name="Zhao Q."/>
            <person name="Zhao S."/>
            <person name="Zhu S.C."/>
            <person name="Zhimulev I."/>
            <person name="Coluzzi M."/>
            <person name="della Torre A."/>
            <person name="Roth C.W."/>
            <person name="Louis C."/>
            <person name="Kalush F."/>
            <person name="Mural R.J."/>
            <person name="Myers E.W."/>
            <person name="Adams M.D."/>
            <person name="Smith H.O."/>
            <person name="Broder S."/>
            <person name="Gardner M.J."/>
            <person name="Fraser C.M."/>
            <person name="Birney E."/>
            <person name="Bork P."/>
            <person name="Brey P.T."/>
            <person name="Venter J.C."/>
            <person name="Weissenbach J."/>
            <person name="Kafatos F.C."/>
            <person name="Collins F.H."/>
            <person name="Hoffman S.L."/>
        </authorList>
    </citation>
    <scope>NUCLEOTIDE SEQUENCE [LARGE SCALE GENOMIC DNA]</scope>
    <source>
        <strain>PEST</strain>
    </source>
</reference>
<keyword id="KW-0175">Coiled coil</keyword>
<keyword id="KW-0472">Membrane</keyword>
<keyword id="KW-1185">Reference proteome</keyword>
<keyword id="KW-0812">Transmembrane</keyword>
<keyword id="KW-1133">Transmembrane helix</keyword>
<sequence length="60" mass="7264">MRKLRGGQTKETRKQRQERKEENLKIQQQMKTIVLPTIGVIFLCIVVYVFLKTRPRYEEL</sequence>
<feature type="chain" id="PRO_0000365552" description="Single-pass membrane and coiled-coil domain-containing protein 4 homolog">
    <location>
        <begin position="1"/>
        <end position="60"/>
    </location>
</feature>
<feature type="transmembrane region" description="Helical" evidence="1">
    <location>
        <begin position="31"/>
        <end position="51"/>
    </location>
</feature>
<feature type="region of interest" description="Disordered" evidence="2">
    <location>
        <begin position="1"/>
        <end position="23"/>
    </location>
</feature>
<feature type="coiled-coil region" evidence="1">
    <location>
        <begin position="8"/>
        <end position="33"/>
    </location>
</feature>
<feature type="compositionally biased region" description="Basic and acidic residues" evidence="2">
    <location>
        <begin position="8"/>
        <end position="23"/>
    </location>
</feature>
<name>SMCO4_ANOGA</name>